<feature type="chain" id="PRO_1000131630" description="UPF0260 protein YcgN">
    <location>
        <begin position="1"/>
        <end position="153"/>
    </location>
</feature>
<accession>B5F3T1</accession>
<sequence>MADTLMSDIPFWQRKTLDEMTDAEWESLCDGCGQCCLHKLMDEDTDEIYFTNVACRQLNIKTCQCRHYERRFEFEPDCIKLTRENLPDFEWLPMTCAYRLLAEGKPLPTWHPLLTGSKAAMHGERISVRHIAVKESEVRDWQDHILNKPSWAE</sequence>
<comment type="similarity">
    <text evidence="1">Belongs to the UPF0260 family.</text>
</comment>
<gene>
    <name evidence="1" type="primary">ycgN</name>
    <name type="ordered locus">SeAg_B1322</name>
</gene>
<dbReference type="EMBL" id="CP001138">
    <property type="protein sequence ID" value="ACH49908.1"/>
    <property type="molecule type" value="Genomic_DNA"/>
</dbReference>
<dbReference type="SMR" id="B5F3T1"/>
<dbReference type="KEGG" id="sea:SeAg_B1322"/>
<dbReference type="HOGENOM" id="CLU_109769_2_0_6"/>
<dbReference type="Proteomes" id="UP000008819">
    <property type="component" value="Chromosome"/>
</dbReference>
<dbReference type="HAMAP" id="MF_00676">
    <property type="entry name" value="UPF0260"/>
    <property type="match status" value="1"/>
</dbReference>
<dbReference type="InterPro" id="IPR005358">
    <property type="entry name" value="Puta_zinc/iron-chelating_dom"/>
</dbReference>
<dbReference type="InterPro" id="IPR008228">
    <property type="entry name" value="UCP006173"/>
</dbReference>
<dbReference type="NCBIfam" id="NF003498">
    <property type="entry name" value="PRK05170.1-1"/>
    <property type="match status" value="1"/>
</dbReference>
<dbReference type="NCBIfam" id="NF003501">
    <property type="entry name" value="PRK05170.1-5"/>
    <property type="match status" value="1"/>
</dbReference>
<dbReference type="NCBIfam" id="NF003503">
    <property type="entry name" value="PRK05170.2-1"/>
    <property type="match status" value="1"/>
</dbReference>
<dbReference type="NCBIfam" id="NF003507">
    <property type="entry name" value="PRK05170.2-5"/>
    <property type="match status" value="1"/>
</dbReference>
<dbReference type="PANTHER" id="PTHR37421">
    <property type="entry name" value="UPF0260 PROTEIN YCGN"/>
    <property type="match status" value="1"/>
</dbReference>
<dbReference type="PANTHER" id="PTHR37421:SF1">
    <property type="entry name" value="UPF0260 PROTEIN YCGN"/>
    <property type="match status" value="1"/>
</dbReference>
<dbReference type="Pfam" id="PF03692">
    <property type="entry name" value="CxxCxxCC"/>
    <property type="match status" value="1"/>
</dbReference>
<dbReference type="PIRSF" id="PIRSF006173">
    <property type="entry name" value="UCP006173"/>
    <property type="match status" value="1"/>
</dbReference>
<name>YCGN_SALA4</name>
<reference key="1">
    <citation type="journal article" date="2011" name="J. Bacteriol.">
        <title>Comparative genomics of 28 Salmonella enterica isolates: evidence for CRISPR-mediated adaptive sublineage evolution.</title>
        <authorList>
            <person name="Fricke W.F."/>
            <person name="Mammel M.K."/>
            <person name="McDermott P.F."/>
            <person name="Tartera C."/>
            <person name="White D.G."/>
            <person name="Leclerc J.E."/>
            <person name="Ravel J."/>
            <person name="Cebula T.A."/>
        </authorList>
    </citation>
    <scope>NUCLEOTIDE SEQUENCE [LARGE SCALE GENOMIC DNA]</scope>
    <source>
        <strain>SL483</strain>
    </source>
</reference>
<protein>
    <recommendedName>
        <fullName evidence="1">UPF0260 protein YcgN</fullName>
    </recommendedName>
</protein>
<organism>
    <name type="scientific">Salmonella agona (strain SL483)</name>
    <dbReference type="NCBI Taxonomy" id="454166"/>
    <lineage>
        <taxon>Bacteria</taxon>
        <taxon>Pseudomonadati</taxon>
        <taxon>Pseudomonadota</taxon>
        <taxon>Gammaproteobacteria</taxon>
        <taxon>Enterobacterales</taxon>
        <taxon>Enterobacteriaceae</taxon>
        <taxon>Salmonella</taxon>
    </lineage>
</organism>
<evidence type="ECO:0000255" key="1">
    <source>
        <dbReference type="HAMAP-Rule" id="MF_00676"/>
    </source>
</evidence>
<proteinExistence type="inferred from homology"/>